<comment type="function">
    <text evidence="2">Single-stranded DNA-binding serine protease that mediates the proteolytic cleavage of covalent DNA-protein cross-links (DPCs) during DNA synthesis, thereby playing a key role in maintaining genomic integrity. DPCs are highly toxic DNA lesions that interfere with essential chromatin transactions, such as replication and transcription, and which are induced by reactive agents, such as UV light or formaldehyde. Protects replication fork from stalling by removing DPCs, such as covalently trapped topoisomerase 1 (TOP1) adducts on DNA lesion, or poly(ADP-ribose) polymerase 1 (PARP1)-DNA complexes trapped by PARP inhibitors. Required for PCNA loading on replication sites. Promotes S-phase entry and DNA synthesis.</text>
</comment>
<comment type="subunit">
    <text evidence="2">Interacts (via PIP-box) with PCNA; this interaction is direct.</text>
</comment>
<comment type="subcellular location">
    <subcellularLocation>
        <location evidence="2">Nucleus</location>
    </subcellularLocation>
    <subcellularLocation>
        <location evidence="2">Chromosome</location>
    </subcellularLocation>
    <subcellularLocation>
        <location evidence="2">Cytoplasm</location>
    </subcellularLocation>
    <text evidence="2">Mainly localizes to nucleus: colocalizes with PCNA on replication sites.</text>
</comment>
<comment type="domain">
    <text evidence="2">The PIP-box mediates the interaction with PCNA.</text>
</comment>
<comment type="PTM">
    <text evidence="2">Autocatalytically cleaved; autocatalytic cleavage takes place in trans.</text>
</comment>
<comment type="similarity">
    <text evidence="4">Belongs to the FAM111 family.</text>
</comment>
<comment type="sequence caution" evidence="4">
    <conflict type="frameshift">
        <sequence resource="EMBL-CDS" id="AAH38020"/>
    </conflict>
</comment>
<feature type="chain" id="PRO_0000274408" description="Serine protease FAM111A">
    <location>
        <begin position="1"/>
        <end position="613"/>
    </location>
</feature>
<feature type="region of interest" description="Disordered" evidence="3">
    <location>
        <begin position="1"/>
        <end position="72"/>
    </location>
</feature>
<feature type="compositionally biased region" description="Basic and acidic residues" evidence="3">
    <location>
        <begin position="40"/>
        <end position="56"/>
    </location>
</feature>
<feature type="active site" description="Charge relay system" evidence="1">
    <location>
        <position position="383"/>
    </location>
</feature>
<feature type="active site" description="Charge relay system" evidence="1">
    <location>
        <position position="437"/>
    </location>
</feature>
<feature type="active site" description="Charge relay system" evidence="2">
    <location>
        <position position="543"/>
    </location>
</feature>
<feature type="site" description="Cleavage; by autolysis" evidence="2">
    <location>
        <begin position="331"/>
        <end position="332"/>
    </location>
</feature>
<feature type="modified residue" description="Phosphoserine" evidence="2">
    <location>
        <position position="25"/>
    </location>
</feature>
<feature type="cross-link" description="Glycyl lysine isopeptide (Lys-Gly) (interchain with G-Cter in SUMO2)" evidence="2">
    <location>
        <position position="19"/>
    </location>
</feature>
<feature type="cross-link" description="Glycyl lysine isopeptide (Lys-Gly) (interchain with G-Cter in SUMO2)" evidence="2">
    <location>
        <position position="29"/>
    </location>
</feature>
<feature type="cross-link" description="Glycyl lysine isopeptide (Lys-Gly) (interchain with G-Cter in SUMO2)" evidence="2">
    <location>
        <position position="62"/>
    </location>
</feature>
<feature type="sequence conflict" description="In Ref. 1; BAE42988." evidence="4" ref="1">
    <original>CT</original>
    <variation>RS</variation>
    <location>
        <begin position="227"/>
        <end position="228"/>
    </location>
</feature>
<feature type="sequence conflict" description="In Ref. 2; AAH19638." evidence="4" ref="2">
    <original>ND</original>
    <variation>GN</variation>
    <location>
        <begin position="239"/>
        <end position="240"/>
    </location>
</feature>
<feature type="sequence conflict" description="In Ref. 2; AAH19638." evidence="4" ref="2">
    <original>T</original>
    <variation>S</variation>
    <location>
        <position position="243"/>
    </location>
</feature>
<feature type="sequence conflict" description="In Ref. 2; AAH19638." evidence="4" ref="2">
    <original>V</original>
    <variation>A</variation>
    <location>
        <position position="272"/>
    </location>
</feature>
<feature type="sequence conflict" description="In Ref. 1; BAE42988." evidence="4" ref="1">
    <original>N</original>
    <variation>K</variation>
    <location>
        <position position="282"/>
    </location>
</feature>
<feature type="sequence conflict" description="In Ref. 2; AAH19638." evidence="4" ref="2">
    <original>V</original>
    <variation>M</variation>
    <location>
        <position position="293"/>
    </location>
</feature>
<feature type="sequence conflict" description="In Ref. 2; AAH19638." evidence="4" ref="2">
    <original>E</original>
    <variation>K</variation>
    <location>
        <position position="301"/>
    </location>
</feature>
<feature type="sequence conflict" description="In Ref. 2; AAH19638." evidence="4" ref="2">
    <original>K</original>
    <variation>E</variation>
    <location>
        <position position="304"/>
    </location>
</feature>
<feature type="sequence conflict" description="In Ref. 1; BAE42988." evidence="4" ref="1">
    <original>K</original>
    <variation>E</variation>
    <location>
        <position position="325"/>
    </location>
</feature>
<feature type="sequence conflict" description="In Ref. 1; BAE42988." evidence="4" ref="1">
    <original>H</original>
    <variation>Q</variation>
    <location>
        <position position="330"/>
    </location>
</feature>
<feature type="sequence conflict" description="In Ref. 1; BAE42988." evidence="4" ref="1">
    <original>TR</original>
    <variation>KS</variation>
    <location>
        <begin position="335"/>
        <end position="336"/>
    </location>
</feature>
<feature type="sequence conflict" description="In Ref. 1; BAE42988." evidence="4" ref="1">
    <original>KVVKH</original>
    <variation>TVHEN</variation>
    <location>
        <begin position="342"/>
        <end position="346"/>
    </location>
</feature>
<feature type="sequence conflict" description="In Ref. 2; AAH19638." evidence="4" ref="2">
    <original>K</original>
    <variation>Q</variation>
    <location>
        <position position="342"/>
    </location>
</feature>
<feature type="sequence conflict" description="In Ref. 1; BAE42988." evidence="4" ref="1">
    <original>D</original>
    <variation>A</variation>
    <location>
        <position position="352"/>
    </location>
</feature>
<feature type="sequence conflict" description="In Ref. 1; BAE42988." evidence="4" ref="1">
    <original>F</original>
    <variation>Y</variation>
    <location>
        <position position="356"/>
    </location>
</feature>
<feature type="sequence conflict" description="In Ref. 1; BAE42988." evidence="4" ref="1">
    <original>N</original>
    <variation>D</variation>
    <location>
        <position position="360"/>
    </location>
</feature>
<feature type="sequence conflict" description="In Ref. 1; BAE42988." evidence="4" ref="1">
    <original>N</original>
    <variation>S</variation>
    <location>
        <position position="400"/>
    </location>
</feature>
<feature type="sequence conflict" description="In Ref. 1; BAE42988." evidence="4" ref="1">
    <original>EELLPTG</original>
    <variation>KDFPLTK</variation>
    <location>
        <begin position="413"/>
        <end position="419"/>
    </location>
</feature>
<feature type="sequence conflict" description="In Ref. 1; BAE42988." evidence="4" ref="1">
    <original>H</original>
    <variation>D</variation>
    <location>
        <position position="435"/>
    </location>
</feature>
<feature type="sequence conflict" description="In Ref. 1; BAE42988." evidence="4" ref="1">
    <original>HRIR</original>
    <variation>NGIG</variation>
    <location>
        <begin position="456"/>
        <end position="459"/>
    </location>
</feature>
<feature type="sequence conflict" description="In Ref. 1; BAE42988." evidence="4" ref="1">
    <original>HS</original>
    <variation>LG</variation>
    <location>
        <begin position="463"/>
        <end position="464"/>
    </location>
</feature>
<feature type="sequence conflict" description="In Ref. 2; AAH19638." evidence="4" ref="2">
    <original>H</original>
    <variation>P</variation>
    <location>
        <position position="463"/>
    </location>
</feature>
<feature type="sequence conflict" description="In Ref. 1; BAE42988." evidence="4" ref="1">
    <original>E</original>
    <variation>G</variation>
    <location>
        <position position="476"/>
    </location>
</feature>
<feature type="sequence conflict" description="In Ref. 1; BAE42988." evidence="4" ref="1">
    <original>IDC</original>
    <variation>SDG</variation>
    <location>
        <begin position="480"/>
        <end position="482"/>
    </location>
</feature>
<feature type="sequence conflict" description="In Ref. 1; BAE42988." evidence="4" ref="1">
    <original>S</original>
    <variation>G</variation>
    <location>
        <position position="489"/>
    </location>
</feature>
<feature type="sequence conflict" description="In Ref. 1; BAE42988." evidence="4" ref="1">
    <original>F</original>
    <variation>C</variation>
    <location>
        <position position="507"/>
    </location>
</feature>
<feature type="sequence conflict" description="In Ref. 1; BAE42988." evidence="4" ref="1">
    <original>V</original>
    <variation>I</variation>
    <location>
        <position position="532"/>
    </location>
</feature>
<feature type="sequence conflict" description="In Ref. 1; BAE42988." evidence="4" ref="1">
    <original>N</original>
    <variation>S</variation>
    <location>
        <position position="572"/>
    </location>
</feature>
<feature type="sequence conflict" description="In Ref. 1; BAE42988." evidence="4" ref="1">
    <original>I</original>
    <variation>T</variation>
    <location>
        <position position="579"/>
    </location>
</feature>
<feature type="sequence conflict" description="In Ref. 1; BAE42988." evidence="4" ref="1">
    <original>DDH</original>
    <variation>LAN</variation>
    <location>
        <begin position="584"/>
        <end position="586"/>
    </location>
</feature>
<feature type="sequence conflict" description="In Ref. 1; BAE42988." evidence="4" ref="1">
    <original>Y</original>
    <variation>H</variation>
    <location>
        <position position="592"/>
    </location>
</feature>
<feature type="sequence conflict" description="In Ref. 1; BAE42988." evidence="4" ref="1">
    <original>IS</original>
    <variation>VF</variation>
    <location>
        <begin position="599"/>
        <end position="600"/>
    </location>
</feature>
<feature type="sequence conflict" description="In Ref. 2; AAH19638." evidence="4" ref="2">
    <original>Q</original>
    <variation>E</variation>
    <location>
        <position position="604"/>
    </location>
</feature>
<feature type="sequence conflict" description="In Ref. 1; BAE42988." evidence="4" ref="1">
    <original>N</original>
    <variation>D</variation>
    <location>
        <position position="605"/>
    </location>
</feature>
<feature type="sequence conflict" description="In Ref. 1; BAE42988." evidence="4" ref="1">
    <original>IDF</original>
    <variation>TDS</variation>
    <location>
        <begin position="611"/>
        <end position="613"/>
    </location>
</feature>
<name>F111A_MOUSE</name>
<protein>
    <recommendedName>
        <fullName evidence="4">Serine protease FAM111A</fullName>
        <ecNumber evidence="2">3.4.21.-</ecNumber>
    </recommendedName>
</protein>
<evidence type="ECO:0000250" key="1">
    <source>
        <dbReference type="UniProtKB" id="P06681"/>
    </source>
</evidence>
<evidence type="ECO:0000250" key="2">
    <source>
        <dbReference type="UniProtKB" id="Q96PZ2"/>
    </source>
</evidence>
<evidence type="ECO:0000256" key="3">
    <source>
        <dbReference type="SAM" id="MobiDB-lite"/>
    </source>
</evidence>
<evidence type="ECO:0000305" key="4"/>
<evidence type="ECO:0000312" key="5">
    <source>
        <dbReference type="MGI" id="MGI:1915508"/>
    </source>
</evidence>
<accession>Q9D2L9</accession>
<accession>Q3T9N2</accession>
<accession>Q8BLH2</accession>
<accession>Q8CI07</accession>
<accession>Q8VE75</accession>
<accession>Q9CU11</accession>
<gene>
    <name evidence="5" type="primary">Fam111a</name>
</gene>
<keyword id="KW-0068">Autocatalytic cleavage</keyword>
<keyword id="KW-0158">Chromosome</keyword>
<keyword id="KW-0963">Cytoplasm</keyword>
<keyword id="KW-0227">DNA damage</keyword>
<keyword id="KW-0234">DNA repair</keyword>
<keyword id="KW-0235">DNA replication</keyword>
<keyword id="KW-0238">DNA-binding</keyword>
<keyword id="KW-0378">Hydrolase</keyword>
<keyword id="KW-1017">Isopeptide bond</keyword>
<keyword id="KW-0539">Nucleus</keyword>
<keyword id="KW-0597">Phosphoprotein</keyword>
<keyword id="KW-0645">Protease</keyword>
<keyword id="KW-1185">Reference proteome</keyword>
<keyword id="KW-0832">Ubl conjugation</keyword>
<sequence>MSCKKRKSQISFNPRKNKKIKDYFSQVPKEEQNDPNTVKVDSKKMPRDITNTRDQRPLSPRKTRQDQTPPLNKKITVTLGVNSRKHKNMKYELTCRETSSLYAALNTLSAVREEVESQKGREMLVCGKEGIEGYLNLGMPVCCIPEGSHVVITFCQCKSKTQENKQFFESQDQASTNYVRFCIHAVGSKRKKILKCGELQKEGNKLCVYGFKGETIRDTLRKDGRFCTFIESDDWKLINDLDTIIENTQPVDELEGKLFQVAAELPKNPRVVSVTQNSGSENRNFHKLEEYIVNEYTTLKEEGKKLRAYIKEKSEKRKKKASLFKVHKEHFGKMTRNSTPVKVVKHLSRVSDSVGFLWWNNNGNAGCATCFVFKELYILTCQHVIASIVGEGIDSSEWANIISQCVKVTFDYEELLPTGDKFFMVKPWFEISDKHLDYAVLELKENGQEVPAGLYHRIRPVPHSGLIYIIGHPEGEKKSIDCCTVVPQSSRRKKCQENFQAREEAGFCFSTSFIHMYTQRSFQEMLHNSDVVTYDTSFFGGSSGSPVFDSNGSLVAMHAAGITCTYQAGVSNIIEFGSIMESIDDHMKQDKYKEWYNTISGNVQNVEMLSIDF</sequence>
<proteinExistence type="evidence at transcript level"/>
<dbReference type="EC" id="3.4.21.-" evidence="2"/>
<dbReference type="EMBL" id="AK018830">
    <property type="protein sequence ID" value="BAB31452.3"/>
    <property type="molecule type" value="mRNA"/>
</dbReference>
<dbReference type="EMBL" id="AK019499">
    <property type="protein sequence ID" value="BAB31763.1"/>
    <property type="molecule type" value="mRNA"/>
</dbReference>
<dbReference type="EMBL" id="AK045189">
    <property type="protein sequence ID" value="BAC32254.1"/>
    <property type="molecule type" value="mRNA"/>
</dbReference>
<dbReference type="EMBL" id="AK172402">
    <property type="protein sequence ID" value="BAE42988.1"/>
    <property type="molecule type" value="mRNA"/>
</dbReference>
<dbReference type="EMBL" id="BC019638">
    <property type="protein sequence ID" value="AAH19638.1"/>
    <property type="molecule type" value="mRNA"/>
</dbReference>
<dbReference type="EMBL" id="BC038020">
    <property type="protein sequence ID" value="AAH38020.1"/>
    <property type="status" value="ALT_FRAME"/>
    <property type="molecule type" value="mRNA"/>
</dbReference>
<dbReference type="CCDS" id="CCDS29632.1"/>
<dbReference type="RefSeq" id="NP_001333474.1">
    <property type="nucleotide sequence ID" value="NM_001346545.1"/>
</dbReference>
<dbReference type="RefSeq" id="NP_080916.1">
    <property type="nucleotide sequence ID" value="NM_026640.2"/>
</dbReference>
<dbReference type="SMR" id="Q9D2L9"/>
<dbReference type="FunCoup" id="Q9D2L9">
    <property type="interactions" value="1755"/>
</dbReference>
<dbReference type="STRING" id="10090.ENSMUSP00000119518"/>
<dbReference type="iPTMnet" id="Q9D2L9"/>
<dbReference type="PhosphoSitePlus" id="Q9D2L9"/>
<dbReference type="PaxDb" id="10090-ENSMUSP00000119518"/>
<dbReference type="ProteomicsDB" id="275813"/>
<dbReference type="Pumba" id="Q9D2L9"/>
<dbReference type="Antibodypedia" id="27720">
    <property type="antibodies" value="47 antibodies from 13 providers"/>
</dbReference>
<dbReference type="DNASU" id="107373"/>
<dbReference type="Ensembl" id="ENSMUST00000025595.5">
    <property type="protein sequence ID" value="ENSMUSP00000025595.5"/>
    <property type="gene ID" value="ENSMUSG00000024691.14"/>
</dbReference>
<dbReference type="Ensembl" id="ENSMUST00000144662.8">
    <property type="protein sequence ID" value="ENSMUSP00000119518.2"/>
    <property type="gene ID" value="ENSMUSG00000024691.14"/>
</dbReference>
<dbReference type="GeneID" id="107373"/>
<dbReference type="KEGG" id="mmu:107373"/>
<dbReference type="UCSC" id="uc008guf.1">
    <property type="organism name" value="mouse"/>
</dbReference>
<dbReference type="AGR" id="MGI:1915508"/>
<dbReference type="CTD" id="63901"/>
<dbReference type="MGI" id="MGI:1915508">
    <property type="gene designation" value="Fam111a"/>
</dbReference>
<dbReference type="VEuPathDB" id="HostDB:ENSMUSG00000024691"/>
<dbReference type="eggNOG" id="ENOG502QTFX">
    <property type="taxonomic scope" value="Eukaryota"/>
</dbReference>
<dbReference type="GeneTree" id="ENSGT00390000005182"/>
<dbReference type="InParanoid" id="Q9D2L9"/>
<dbReference type="OMA" id="KEGCKLC"/>
<dbReference type="OrthoDB" id="10025068at2759"/>
<dbReference type="PhylomeDB" id="Q9D2L9"/>
<dbReference type="TreeFam" id="TF332538"/>
<dbReference type="BioGRID-ORCS" id="107373">
    <property type="hits" value="1 hit in 78 CRISPR screens"/>
</dbReference>
<dbReference type="ChiTaRS" id="Fam111a">
    <property type="organism name" value="mouse"/>
</dbReference>
<dbReference type="PRO" id="PR:Q9D2L9"/>
<dbReference type="Proteomes" id="UP000000589">
    <property type="component" value="Chromosome 19"/>
</dbReference>
<dbReference type="RNAct" id="Q9D2L9">
    <property type="molecule type" value="protein"/>
</dbReference>
<dbReference type="Bgee" id="ENSMUSG00000024691">
    <property type="expression patterns" value="Expressed in granulocyte and 213 other cell types or tissues"/>
</dbReference>
<dbReference type="ExpressionAtlas" id="Q9D2L9">
    <property type="expression patterns" value="baseline and differential"/>
</dbReference>
<dbReference type="GO" id="GO:0000785">
    <property type="term" value="C:chromatin"/>
    <property type="evidence" value="ECO:0000250"/>
    <property type="project" value="UniProtKB"/>
</dbReference>
<dbReference type="GO" id="GO:0005737">
    <property type="term" value="C:cytoplasm"/>
    <property type="evidence" value="ECO:0000250"/>
    <property type="project" value="UniProtKB"/>
</dbReference>
<dbReference type="GO" id="GO:0005634">
    <property type="term" value="C:nucleus"/>
    <property type="evidence" value="ECO:0000250"/>
    <property type="project" value="UniProtKB"/>
</dbReference>
<dbReference type="GO" id="GO:0008233">
    <property type="term" value="F:peptidase activity"/>
    <property type="evidence" value="ECO:0007669"/>
    <property type="project" value="UniProtKB-KW"/>
</dbReference>
<dbReference type="GO" id="GO:0003697">
    <property type="term" value="F:single-stranded DNA binding"/>
    <property type="evidence" value="ECO:0000250"/>
    <property type="project" value="UniProtKB"/>
</dbReference>
<dbReference type="GO" id="GO:0006974">
    <property type="term" value="P:DNA damage response"/>
    <property type="evidence" value="ECO:0000250"/>
    <property type="project" value="UniProtKB"/>
</dbReference>
<dbReference type="GO" id="GO:0006260">
    <property type="term" value="P:DNA replication"/>
    <property type="evidence" value="ECO:0000250"/>
    <property type="project" value="UniProtKB"/>
</dbReference>
<dbReference type="GO" id="GO:0016540">
    <property type="term" value="P:protein autoprocessing"/>
    <property type="evidence" value="ECO:0000250"/>
    <property type="project" value="UniProtKB"/>
</dbReference>
<dbReference type="GO" id="GO:0106300">
    <property type="term" value="P:protein-DNA covalent cross-linking repair"/>
    <property type="evidence" value="ECO:0000250"/>
    <property type="project" value="UniProtKB"/>
</dbReference>
<dbReference type="GO" id="GO:0006508">
    <property type="term" value="P:proteolysis"/>
    <property type="evidence" value="ECO:0000250"/>
    <property type="project" value="UniProtKB"/>
</dbReference>
<dbReference type="GO" id="GO:0031297">
    <property type="term" value="P:replication fork processing"/>
    <property type="evidence" value="ECO:0000250"/>
    <property type="project" value="UniProtKB"/>
</dbReference>
<dbReference type="Gene3D" id="2.40.10.10">
    <property type="entry name" value="Trypsin-like serine proteases"/>
    <property type="match status" value="2"/>
</dbReference>
<dbReference type="InterPro" id="IPR009003">
    <property type="entry name" value="Peptidase_S1_PA"/>
</dbReference>
<dbReference type="InterPro" id="IPR043504">
    <property type="entry name" value="Peptidase_S1_PA_chymotrypsin"/>
</dbReference>
<dbReference type="PANTHER" id="PTHR14389:SF14">
    <property type="entry name" value="SERINE PROTEASE FAM111A"/>
    <property type="match status" value="1"/>
</dbReference>
<dbReference type="PANTHER" id="PTHR14389">
    <property type="entry name" value="SI:CH1073-475A24.1"/>
    <property type="match status" value="1"/>
</dbReference>
<dbReference type="Pfam" id="PF13365">
    <property type="entry name" value="Trypsin_2"/>
    <property type="match status" value="1"/>
</dbReference>
<dbReference type="SUPFAM" id="SSF50494">
    <property type="entry name" value="Trypsin-like serine proteases"/>
    <property type="match status" value="1"/>
</dbReference>
<organism>
    <name type="scientific">Mus musculus</name>
    <name type="common">Mouse</name>
    <dbReference type="NCBI Taxonomy" id="10090"/>
    <lineage>
        <taxon>Eukaryota</taxon>
        <taxon>Metazoa</taxon>
        <taxon>Chordata</taxon>
        <taxon>Craniata</taxon>
        <taxon>Vertebrata</taxon>
        <taxon>Euteleostomi</taxon>
        <taxon>Mammalia</taxon>
        <taxon>Eutheria</taxon>
        <taxon>Euarchontoglires</taxon>
        <taxon>Glires</taxon>
        <taxon>Rodentia</taxon>
        <taxon>Myomorpha</taxon>
        <taxon>Muroidea</taxon>
        <taxon>Muridae</taxon>
        <taxon>Murinae</taxon>
        <taxon>Mus</taxon>
        <taxon>Mus</taxon>
    </lineage>
</organism>
<reference key="1">
    <citation type="journal article" date="2005" name="Science">
        <title>The transcriptional landscape of the mammalian genome.</title>
        <authorList>
            <person name="Carninci P."/>
            <person name="Kasukawa T."/>
            <person name="Katayama S."/>
            <person name="Gough J."/>
            <person name="Frith M.C."/>
            <person name="Maeda N."/>
            <person name="Oyama R."/>
            <person name="Ravasi T."/>
            <person name="Lenhard B."/>
            <person name="Wells C."/>
            <person name="Kodzius R."/>
            <person name="Shimokawa K."/>
            <person name="Bajic V.B."/>
            <person name="Brenner S.E."/>
            <person name="Batalov S."/>
            <person name="Forrest A.R."/>
            <person name="Zavolan M."/>
            <person name="Davis M.J."/>
            <person name="Wilming L.G."/>
            <person name="Aidinis V."/>
            <person name="Allen J.E."/>
            <person name="Ambesi-Impiombato A."/>
            <person name="Apweiler R."/>
            <person name="Aturaliya R.N."/>
            <person name="Bailey T.L."/>
            <person name="Bansal M."/>
            <person name="Baxter L."/>
            <person name="Beisel K.W."/>
            <person name="Bersano T."/>
            <person name="Bono H."/>
            <person name="Chalk A.M."/>
            <person name="Chiu K.P."/>
            <person name="Choudhary V."/>
            <person name="Christoffels A."/>
            <person name="Clutterbuck D.R."/>
            <person name="Crowe M.L."/>
            <person name="Dalla E."/>
            <person name="Dalrymple B.P."/>
            <person name="de Bono B."/>
            <person name="Della Gatta G."/>
            <person name="di Bernardo D."/>
            <person name="Down T."/>
            <person name="Engstrom P."/>
            <person name="Fagiolini M."/>
            <person name="Faulkner G."/>
            <person name="Fletcher C.F."/>
            <person name="Fukushima T."/>
            <person name="Furuno M."/>
            <person name="Futaki S."/>
            <person name="Gariboldi M."/>
            <person name="Georgii-Hemming P."/>
            <person name="Gingeras T.R."/>
            <person name="Gojobori T."/>
            <person name="Green R.E."/>
            <person name="Gustincich S."/>
            <person name="Harbers M."/>
            <person name="Hayashi Y."/>
            <person name="Hensch T.K."/>
            <person name="Hirokawa N."/>
            <person name="Hill D."/>
            <person name="Huminiecki L."/>
            <person name="Iacono M."/>
            <person name="Ikeo K."/>
            <person name="Iwama A."/>
            <person name="Ishikawa T."/>
            <person name="Jakt M."/>
            <person name="Kanapin A."/>
            <person name="Katoh M."/>
            <person name="Kawasawa Y."/>
            <person name="Kelso J."/>
            <person name="Kitamura H."/>
            <person name="Kitano H."/>
            <person name="Kollias G."/>
            <person name="Krishnan S.P."/>
            <person name="Kruger A."/>
            <person name="Kummerfeld S.K."/>
            <person name="Kurochkin I.V."/>
            <person name="Lareau L.F."/>
            <person name="Lazarevic D."/>
            <person name="Lipovich L."/>
            <person name="Liu J."/>
            <person name="Liuni S."/>
            <person name="McWilliam S."/>
            <person name="Madan Babu M."/>
            <person name="Madera M."/>
            <person name="Marchionni L."/>
            <person name="Matsuda H."/>
            <person name="Matsuzawa S."/>
            <person name="Miki H."/>
            <person name="Mignone F."/>
            <person name="Miyake S."/>
            <person name="Morris K."/>
            <person name="Mottagui-Tabar S."/>
            <person name="Mulder N."/>
            <person name="Nakano N."/>
            <person name="Nakauchi H."/>
            <person name="Ng P."/>
            <person name="Nilsson R."/>
            <person name="Nishiguchi S."/>
            <person name="Nishikawa S."/>
            <person name="Nori F."/>
            <person name="Ohara O."/>
            <person name="Okazaki Y."/>
            <person name="Orlando V."/>
            <person name="Pang K.C."/>
            <person name="Pavan W.J."/>
            <person name="Pavesi G."/>
            <person name="Pesole G."/>
            <person name="Petrovsky N."/>
            <person name="Piazza S."/>
            <person name="Reed J."/>
            <person name="Reid J.F."/>
            <person name="Ring B.Z."/>
            <person name="Ringwald M."/>
            <person name="Rost B."/>
            <person name="Ruan Y."/>
            <person name="Salzberg S.L."/>
            <person name="Sandelin A."/>
            <person name="Schneider C."/>
            <person name="Schoenbach C."/>
            <person name="Sekiguchi K."/>
            <person name="Semple C.A."/>
            <person name="Seno S."/>
            <person name="Sessa L."/>
            <person name="Sheng Y."/>
            <person name="Shibata Y."/>
            <person name="Shimada H."/>
            <person name="Shimada K."/>
            <person name="Silva D."/>
            <person name="Sinclair B."/>
            <person name="Sperling S."/>
            <person name="Stupka E."/>
            <person name="Sugiura K."/>
            <person name="Sultana R."/>
            <person name="Takenaka Y."/>
            <person name="Taki K."/>
            <person name="Tammoja K."/>
            <person name="Tan S.L."/>
            <person name="Tang S."/>
            <person name="Taylor M.S."/>
            <person name="Tegner J."/>
            <person name="Teichmann S.A."/>
            <person name="Ueda H.R."/>
            <person name="van Nimwegen E."/>
            <person name="Verardo R."/>
            <person name="Wei C.L."/>
            <person name="Yagi K."/>
            <person name="Yamanishi H."/>
            <person name="Zabarovsky E."/>
            <person name="Zhu S."/>
            <person name="Zimmer A."/>
            <person name="Hide W."/>
            <person name="Bult C."/>
            <person name="Grimmond S.M."/>
            <person name="Teasdale R.D."/>
            <person name="Liu E.T."/>
            <person name="Brusic V."/>
            <person name="Quackenbush J."/>
            <person name="Wahlestedt C."/>
            <person name="Mattick J.S."/>
            <person name="Hume D.A."/>
            <person name="Kai C."/>
            <person name="Sasaki D."/>
            <person name="Tomaru Y."/>
            <person name="Fukuda S."/>
            <person name="Kanamori-Katayama M."/>
            <person name="Suzuki M."/>
            <person name="Aoki J."/>
            <person name="Arakawa T."/>
            <person name="Iida J."/>
            <person name="Imamura K."/>
            <person name="Itoh M."/>
            <person name="Kato T."/>
            <person name="Kawaji H."/>
            <person name="Kawagashira N."/>
            <person name="Kawashima T."/>
            <person name="Kojima M."/>
            <person name="Kondo S."/>
            <person name="Konno H."/>
            <person name="Nakano K."/>
            <person name="Ninomiya N."/>
            <person name="Nishio T."/>
            <person name="Okada M."/>
            <person name="Plessy C."/>
            <person name="Shibata K."/>
            <person name="Shiraki T."/>
            <person name="Suzuki S."/>
            <person name="Tagami M."/>
            <person name="Waki K."/>
            <person name="Watahiki A."/>
            <person name="Okamura-Oho Y."/>
            <person name="Suzuki H."/>
            <person name="Kawai J."/>
            <person name="Hayashizaki Y."/>
        </authorList>
    </citation>
    <scope>NUCLEOTIDE SEQUENCE [LARGE SCALE MRNA]</scope>
    <source>
        <strain>C57BL/6J</strain>
        <strain>NOD</strain>
        <tissue>Embryo</tissue>
        <tissue>Placenta</tissue>
        <tissue>Skin</tissue>
        <tissue>Spleen</tissue>
        <tissue>Stomach</tissue>
    </source>
</reference>
<reference key="2">
    <citation type="journal article" date="2004" name="Genome Res.">
        <title>The status, quality, and expansion of the NIH full-length cDNA project: the Mammalian Gene Collection (MGC).</title>
        <authorList>
            <consortium name="The MGC Project Team"/>
        </authorList>
    </citation>
    <scope>NUCLEOTIDE SEQUENCE [LARGE SCALE MRNA]</scope>
    <source>
        <strain>Czech II</strain>
        <strain>FVB/N</strain>
        <tissue>Mammary tumor</tissue>
    </source>
</reference>